<reference key="1">
    <citation type="journal article" date="2003" name="Proc. Natl. Acad. Sci. U.S.A.">
        <title>Complete genome sequence of the Q-fever pathogen, Coxiella burnetii.</title>
        <authorList>
            <person name="Seshadri R."/>
            <person name="Paulsen I.T."/>
            <person name="Eisen J.A."/>
            <person name="Read T.D."/>
            <person name="Nelson K.E."/>
            <person name="Nelson W.C."/>
            <person name="Ward N.L."/>
            <person name="Tettelin H."/>
            <person name="Davidsen T.M."/>
            <person name="Beanan M.J."/>
            <person name="DeBoy R.T."/>
            <person name="Daugherty S.C."/>
            <person name="Brinkac L.M."/>
            <person name="Madupu R."/>
            <person name="Dodson R.J."/>
            <person name="Khouri H.M."/>
            <person name="Lee K.H."/>
            <person name="Carty H.A."/>
            <person name="Scanlan D."/>
            <person name="Heinzen R.A."/>
            <person name="Thompson H.A."/>
            <person name="Samuel J.E."/>
            <person name="Fraser C.M."/>
            <person name="Heidelberg J.F."/>
        </authorList>
    </citation>
    <scope>NUCLEOTIDE SEQUENCE [LARGE SCALE GENOMIC DNA]</scope>
    <source>
        <strain>RSA 493 / Nine Mile phase I</strain>
    </source>
</reference>
<organism>
    <name type="scientific">Coxiella burnetii (strain RSA 493 / Nine Mile phase I)</name>
    <dbReference type="NCBI Taxonomy" id="227377"/>
    <lineage>
        <taxon>Bacteria</taxon>
        <taxon>Pseudomonadati</taxon>
        <taxon>Pseudomonadota</taxon>
        <taxon>Gammaproteobacteria</taxon>
        <taxon>Legionellales</taxon>
        <taxon>Coxiellaceae</taxon>
        <taxon>Coxiella</taxon>
    </lineage>
</organism>
<protein>
    <recommendedName>
        <fullName evidence="1">Glutamate-1-semialdehyde 2,1-aminomutase</fullName>
        <shortName evidence="1">GSA</shortName>
        <ecNumber evidence="1">5.4.3.8</ecNumber>
    </recommendedName>
    <alternativeName>
        <fullName evidence="1">Glutamate-1-semialdehyde aminotransferase</fullName>
        <shortName evidence="1">GSA-AT</shortName>
    </alternativeName>
</protein>
<evidence type="ECO:0000255" key="1">
    <source>
        <dbReference type="HAMAP-Rule" id="MF_00375"/>
    </source>
</evidence>
<name>GSA_COXBU</name>
<accession>Q83AK3</accession>
<feature type="chain" id="PRO_0000243566" description="Glutamate-1-semialdehyde 2,1-aminomutase">
    <location>
        <begin position="1"/>
        <end position="435"/>
    </location>
</feature>
<feature type="modified residue" description="N6-(pyridoxal phosphate)lysine" evidence="1">
    <location>
        <position position="266"/>
    </location>
</feature>
<comment type="catalytic activity">
    <reaction evidence="1">
        <text>(S)-4-amino-5-oxopentanoate = 5-aminolevulinate</text>
        <dbReference type="Rhea" id="RHEA:14265"/>
        <dbReference type="ChEBI" id="CHEBI:57501"/>
        <dbReference type="ChEBI" id="CHEBI:356416"/>
        <dbReference type="EC" id="5.4.3.8"/>
    </reaction>
</comment>
<comment type="cofactor">
    <cofactor evidence="1">
        <name>pyridoxal 5'-phosphate</name>
        <dbReference type="ChEBI" id="CHEBI:597326"/>
    </cofactor>
</comment>
<comment type="pathway">
    <text evidence="1">Porphyrin-containing compound metabolism; protoporphyrin-IX biosynthesis; 5-aminolevulinate from L-glutamyl-tRNA(Glu): step 2/2.</text>
</comment>
<comment type="subunit">
    <text evidence="1">Homodimer.</text>
</comment>
<comment type="subcellular location">
    <subcellularLocation>
        <location evidence="1">Cytoplasm</location>
    </subcellularLocation>
</comment>
<comment type="similarity">
    <text evidence="1">Belongs to the class-III pyridoxal-phosphate-dependent aminotransferase family. HemL subfamily.</text>
</comment>
<dbReference type="EC" id="5.4.3.8" evidence="1"/>
<dbReference type="EMBL" id="AE016828">
    <property type="protein sequence ID" value="AAO91373.1"/>
    <property type="molecule type" value="Genomic_DNA"/>
</dbReference>
<dbReference type="RefSeq" id="NP_820859.1">
    <property type="nucleotide sequence ID" value="NC_002971.4"/>
</dbReference>
<dbReference type="RefSeq" id="WP_010958513.1">
    <property type="nucleotide sequence ID" value="NC_002971.4"/>
</dbReference>
<dbReference type="SMR" id="Q83AK3"/>
<dbReference type="STRING" id="227377.CBU_1882"/>
<dbReference type="EnsemblBacteria" id="AAO91373">
    <property type="protein sequence ID" value="AAO91373"/>
    <property type="gene ID" value="CBU_1882"/>
</dbReference>
<dbReference type="GeneID" id="1209795"/>
<dbReference type="KEGG" id="cbu:CBU_1882"/>
<dbReference type="PATRIC" id="fig|227377.7.peg.1864"/>
<dbReference type="eggNOG" id="COG0001">
    <property type="taxonomic scope" value="Bacteria"/>
</dbReference>
<dbReference type="HOGENOM" id="CLU_016922_1_5_6"/>
<dbReference type="OrthoDB" id="9801052at2"/>
<dbReference type="UniPathway" id="UPA00251">
    <property type="reaction ID" value="UER00317"/>
</dbReference>
<dbReference type="Proteomes" id="UP000002671">
    <property type="component" value="Chromosome"/>
</dbReference>
<dbReference type="GO" id="GO:0005737">
    <property type="term" value="C:cytoplasm"/>
    <property type="evidence" value="ECO:0007669"/>
    <property type="project" value="UniProtKB-SubCell"/>
</dbReference>
<dbReference type="GO" id="GO:0042286">
    <property type="term" value="F:glutamate-1-semialdehyde 2,1-aminomutase activity"/>
    <property type="evidence" value="ECO:0007669"/>
    <property type="project" value="UniProtKB-UniRule"/>
</dbReference>
<dbReference type="GO" id="GO:0030170">
    <property type="term" value="F:pyridoxal phosphate binding"/>
    <property type="evidence" value="ECO:0007669"/>
    <property type="project" value="InterPro"/>
</dbReference>
<dbReference type="GO" id="GO:0008483">
    <property type="term" value="F:transaminase activity"/>
    <property type="evidence" value="ECO:0007669"/>
    <property type="project" value="InterPro"/>
</dbReference>
<dbReference type="GO" id="GO:0006782">
    <property type="term" value="P:protoporphyrinogen IX biosynthetic process"/>
    <property type="evidence" value="ECO:0007669"/>
    <property type="project" value="UniProtKB-UniRule"/>
</dbReference>
<dbReference type="CDD" id="cd00610">
    <property type="entry name" value="OAT_like"/>
    <property type="match status" value="1"/>
</dbReference>
<dbReference type="FunFam" id="3.40.640.10:FF:000021">
    <property type="entry name" value="Glutamate-1-semialdehyde 2,1-aminomutase"/>
    <property type="match status" value="1"/>
</dbReference>
<dbReference type="Gene3D" id="3.90.1150.10">
    <property type="entry name" value="Aspartate Aminotransferase, domain 1"/>
    <property type="match status" value="1"/>
</dbReference>
<dbReference type="Gene3D" id="3.40.640.10">
    <property type="entry name" value="Type I PLP-dependent aspartate aminotransferase-like (Major domain)"/>
    <property type="match status" value="1"/>
</dbReference>
<dbReference type="HAMAP" id="MF_00375">
    <property type="entry name" value="HemL_aminotrans_3"/>
    <property type="match status" value="1"/>
</dbReference>
<dbReference type="InterPro" id="IPR004639">
    <property type="entry name" value="4pyrrol_synth_GluAld_NH2Trfase"/>
</dbReference>
<dbReference type="InterPro" id="IPR005814">
    <property type="entry name" value="Aminotrans_3"/>
</dbReference>
<dbReference type="InterPro" id="IPR049704">
    <property type="entry name" value="Aminotrans_3_PPA_site"/>
</dbReference>
<dbReference type="InterPro" id="IPR015424">
    <property type="entry name" value="PyrdxlP-dep_Trfase"/>
</dbReference>
<dbReference type="InterPro" id="IPR015421">
    <property type="entry name" value="PyrdxlP-dep_Trfase_major"/>
</dbReference>
<dbReference type="InterPro" id="IPR015422">
    <property type="entry name" value="PyrdxlP-dep_Trfase_small"/>
</dbReference>
<dbReference type="NCBIfam" id="TIGR00713">
    <property type="entry name" value="hemL"/>
    <property type="match status" value="1"/>
</dbReference>
<dbReference type="NCBIfam" id="NF000818">
    <property type="entry name" value="PRK00062.1"/>
    <property type="match status" value="1"/>
</dbReference>
<dbReference type="PANTHER" id="PTHR43713">
    <property type="entry name" value="GLUTAMATE-1-SEMIALDEHYDE 2,1-AMINOMUTASE"/>
    <property type="match status" value="1"/>
</dbReference>
<dbReference type="PANTHER" id="PTHR43713:SF3">
    <property type="entry name" value="GLUTAMATE-1-SEMIALDEHYDE 2,1-AMINOMUTASE 1, CHLOROPLASTIC-RELATED"/>
    <property type="match status" value="1"/>
</dbReference>
<dbReference type="Pfam" id="PF00202">
    <property type="entry name" value="Aminotran_3"/>
    <property type="match status" value="1"/>
</dbReference>
<dbReference type="SUPFAM" id="SSF53383">
    <property type="entry name" value="PLP-dependent transferases"/>
    <property type="match status" value="1"/>
</dbReference>
<dbReference type="PROSITE" id="PS00600">
    <property type="entry name" value="AA_TRANSFER_CLASS_3"/>
    <property type="match status" value="1"/>
</dbReference>
<sequence>MVDHSAALFNKAQNYMPGGVNSPVRAFGAVGGVPRFIKKASGPYLIDVDEKKYIDYVGSWGPMILGHAHPAVIQAAQEAVQNGLSFGAPCENEIKLAALIGEFMPSIEKVRMVNSGTEATMSALRLARGVTGRSKIIKFEGCYHGHADCLLVNAGSGALTFGMPSSPGVPLGTVQDTLTATFNDLDSVAALFEKYSKDIAAIIVEPIAGNMNLIPAAPDFLTGLRELCNQYGSLLIFDEVITGFRVAKGGAQSLYNIRPDLTALGKIIGGGMPVGAYGGRREIMNQLSPEGPVYQAGTLSGNPVAMAAGLATLKELTAENFYSNLKEKTERLVMGILSRAKAAKIPLTANFSCGIFGLIFTSEERVTRYAQAVNGNVEHFRSFFHKMLDNGVYLAPSAFESGFISAAHTNKEVDNTLDIIENIFSVSETYLRISV</sequence>
<proteinExistence type="inferred from homology"/>
<keyword id="KW-0963">Cytoplasm</keyword>
<keyword id="KW-0413">Isomerase</keyword>
<keyword id="KW-0627">Porphyrin biosynthesis</keyword>
<keyword id="KW-0663">Pyridoxal phosphate</keyword>
<keyword id="KW-1185">Reference proteome</keyword>
<gene>
    <name evidence="1" type="primary">hemL</name>
    <name type="ordered locus">CBU_1882</name>
</gene>